<feature type="chain" id="PRO_1000072619" description="D-alanine--D-alanyl carrier protein ligase">
    <location>
        <begin position="1"/>
        <end position="485"/>
    </location>
</feature>
<feature type="binding site" evidence="1">
    <location>
        <begin position="144"/>
        <end position="145"/>
    </location>
    <ligand>
        <name>ATP</name>
        <dbReference type="ChEBI" id="CHEBI:30616"/>
    </ligand>
</feature>
<feature type="binding site" evidence="1">
    <location>
        <position position="189"/>
    </location>
    <ligand>
        <name>D-alanine</name>
        <dbReference type="ChEBI" id="CHEBI:57416"/>
    </ligand>
</feature>
<feature type="binding site" evidence="1">
    <location>
        <begin position="284"/>
        <end position="289"/>
    </location>
    <ligand>
        <name>ATP</name>
        <dbReference type="ChEBI" id="CHEBI:30616"/>
    </ligand>
</feature>
<feature type="binding site" evidence="1">
    <location>
        <position position="293"/>
    </location>
    <ligand>
        <name>D-alanine</name>
        <dbReference type="ChEBI" id="CHEBI:57416"/>
    </ligand>
</feature>
<feature type="binding site" evidence="1">
    <location>
        <position position="365"/>
    </location>
    <ligand>
        <name>ATP</name>
        <dbReference type="ChEBI" id="CHEBI:30616"/>
    </ligand>
</feature>
<feature type="binding site" evidence="1">
    <location>
        <position position="473"/>
    </location>
    <ligand>
        <name>ATP</name>
        <dbReference type="ChEBI" id="CHEBI:30616"/>
    </ligand>
</feature>
<feature type="binding site" evidence="1">
    <location>
        <position position="473"/>
    </location>
    <ligand>
        <name>D-alanine</name>
        <dbReference type="ChEBI" id="CHEBI:57416"/>
    </ligand>
</feature>
<accession>A6QFE3</accession>
<protein>
    <recommendedName>
        <fullName evidence="1">D-alanine--D-alanyl carrier protein ligase</fullName>
        <shortName evidence="1">DCL</shortName>
        <ecNumber evidence="1">6.2.1.54</ecNumber>
    </recommendedName>
    <alternativeName>
        <fullName evidence="1">D-alanine--poly(phosphoribitol) ligase subunit 1</fullName>
    </alternativeName>
    <alternativeName>
        <fullName evidence="1">D-alanine-activating enzyme</fullName>
        <shortName evidence="1">DAE</shortName>
    </alternativeName>
</protein>
<gene>
    <name evidence="1" type="primary">dltA</name>
    <name type="ordered locus">NWMN_0803</name>
</gene>
<comment type="function">
    <text evidence="1">Catalyzes the first step in the D-alanylation of lipoteichoic acid (LTA), the activation of D-alanine and its transfer onto the D-alanyl carrier protein (Dcp) DltC. In an ATP-dependent two-step reaction, forms a high energy D-alanyl-AMP intermediate, followed by transfer of the D-alanyl residue as a thiol ester to the phosphopantheinyl prosthetic group of the Dcp. D-alanylation of LTA plays an important role in modulating the properties of the cell wall in Gram-positive bacteria, influencing the net charge of the cell wall.</text>
</comment>
<comment type="catalytic activity">
    <reaction evidence="1">
        <text>holo-[D-alanyl-carrier protein] + D-alanine + ATP = D-alanyl-[D-alanyl-carrier protein] + AMP + diphosphate</text>
        <dbReference type="Rhea" id="RHEA:55132"/>
        <dbReference type="Rhea" id="RHEA-COMP:14102"/>
        <dbReference type="Rhea" id="RHEA-COMP:14103"/>
        <dbReference type="ChEBI" id="CHEBI:30616"/>
        <dbReference type="ChEBI" id="CHEBI:33019"/>
        <dbReference type="ChEBI" id="CHEBI:57416"/>
        <dbReference type="ChEBI" id="CHEBI:64479"/>
        <dbReference type="ChEBI" id="CHEBI:138620"/>
        <dbReference type="ChEBI" id="CHEBI:456215"/>
        <dbReference type="EC" id="6.2.1.54"/>
    </reaction>
</comment>
<comment type="pathway">
    <text evidence="1">Cell wall biogenesis; lipoteichoic acid biosynthesis.</text>
</comment>
<comment type="subcellular location">
    <subcellularLocation>
        <location evidence="1">Cytoplasm</location>
    </subcellularLocation>
</comment>
<comment type="similarity">
    <text evidence="1">Belongs to the ATP-dependent AMP-binding enzyme family. DltA subfamily.</text>
</comment>
<organism>
    <name type="scientific">Staphylococcus aureus (strain Newman)</name>
    <dbReference type="NCBI Taxonomy" id="426430"/>
    <lineage>
        <taxon>Bacteria</taxon>
        <taxon>Bacillati</taxon>
        <taxon>Bacillota</taxon>
        <taxon>Bacilli</taxon>
        <taxon>Bacillales</taxon>
        <taxon>Staphylococcaceae</taxon>
        <taxon>Staphylococcus</taxon>
    </lineage>
</organism>
<keyword id="KW-0067">ATP-binding</keyword>
<keyword id="KW-0963">Cytoplasm</keyword>
<keyword id="KW-0436">Ligase</keyword>
<keyword id="KW-0547">Nucleotide-binding</keyword>
<proteinExistence type="inferred from homology"/>
<dbReference type="EC" id="6.2.1.54" evidence="1"/>
<dbReference type="EMBL" id="AP009351">
    <property type="protein sequence ID" value="BAF67075.1"/>
    <property type="molecule type" value="Genomic_DNA"/>
</dbReference>
<dbReference type="RefSeq" id="WP_000129653.1">
    <property type="nucleotide sequence ID" value="NZ_JBBIAE010000002.1"/>
</dbReference>
<dbReference type="SMR" id="A6QFE3"/>
<dbReference type="KEGG" id="sae:NWMN_0803"/>
<dbReference type="HOGENOM" id="CLU_000022_2_12_9"/>
<dbReference type="UniPathway" id="UPA00556"/>
<dbReference type="Proteomes" id="UP000006386">
    <property type="component" value="Chromosome"/>
</dbReference>
<dbReference type="GO" id="GO:0005737">
    <property type="term" value="C:cytoplasm"/>
    <property type="evidence" value="ECO:0007669"/>
    <property type="project" value="UniProtKB-SubCell"/>
</dbReference>
<dbReference type="GO" id="GO:0005524">
    <property type="term" value="F:ATP binding"/>
    <property type="evidence" value="ECO:0007669"/>
    <property type="project" value="UniProtKB-KW"/>
</dbReference>
<dbReference type="GO" id="GO:0047473">
    <property type="term" value="F:D-alanine [D-alanyl carrier protein] ligase activity"/>
    <property type="evidence" value="ECO:0007669"/>
    <property type="project" value="UniProtKB-UniRule"/>
</dbReference>
<dbReference type="GO" id="GO:0070395">
    <property type="term" value="P:lipoteichoic acid biosynthetic process"/>
    <property type="evidence" value="ECO:0007669"/>
    <property type="project" value="UniProtKB-UniRule"/>
</dbReference>
<dbReference type="CDD" id="cd05945">
    <property type="entry name" value="DltA"/>
    <property type="match status" value="1"/>
</dbReference>
<dbReference type="FunFam" id="3.30.300.30:FF:000012">
    <property type="entry name" value="D-alanine--D-alanyl carrier protein ligase"/>
    <property type="match status" value="1"/>
</dbReference>
<dbReference type="Gene3D" id="3.30.300.30">
    <property type="match status" value="1"/>
</dbReference>
<dbReference type="Gene3D" id="3.40.50.12780">
    <property type="entry name" value="N-terminal domain of ligase-like"/>
    <property type="match status" value="1"/>
</dbReference>
<dbReference type="HAMAP" id="MF_00593">
    <property type="entry name" value="DltA"/>
    <property type="match status" value="1"/>
</dbReference>
<dbReference type="InterPro" id="IPR010071">
    <property type="entry name" value="AA_adenyl_dom"/>
</dbReference>
<dbReference type="InterPro" id="IPR025110">
    <property type="entry name" value="AMP-bd_C"/>
</dbReference>
<dbReference type="InterPro" id="IPR045851">
    <property type="entry name" value="AMP-bd_C_sf"/>
</dbReference>
<dbReference type="InterPro" id="IPR000873">
    <property type="entry name" value="AMP-dep_synth/lig_dom"/>
</dbReference>
<dbReference type="InterPro" id="IPR042099">
    <property type="entry name" value="ANL_N_sf"/>
</dbReference>
<dbReference type="InterPro" id="IPR010072">
    <property type="entry name" value="DltA"/>
</dbReference>
<dbReference type="InterPro" id="IPR044507">
    <property type="entry name" value="DltA-like"/>
</dbReference>
<dbReference type="NCBIfam" id="TIGR01733">
    <property type="entry name" value="AA-adenyl-dom"/>
    <property type="match status" value="1"/>
</dbReference>
<dbReference type="NCBIfam" id="TIGR01734">
    <property type="entry name" value="D-ala-DACP-lig"/>
    <property type="match status" value="1"/>
</dbReference>
<dbReference type="NCBIfam" id="NF003417">
    <property type="entry name" value="PRK04813.1"/>
    <property type="match status" value="1"/>
</dbReference>
<dbReference type="PANTHER" id="PTHR45398">
    <property type="match status" value="1"/>
</dbReference>
<dbReference type="PANTHER" id="PTHR45398:SF1">
    <property type="entry name" value="ENZYME, PUTATIVE (JCVI)-RELATED"/>
    <property type="match status" value="1"/>
</dbReference>
<dbReference type="Pfam" id="PF00501">
    <property type="entry name" value="AMP-binding"/>
    <property type="match status" value="1"/>
</dbReference>
<dbReference type="Pfam" id="PF13193">
    <property type="entry name" value="AMP-binding_C"/>
    <property type="match status" value="1"/>
</dbReference>
<dbReference type="SUPFAM" id="SSF56801">
    <property type="entry name" value="Acetyl-CoA synthetase-like"/>
    <property type="match status" value="1"/>
</dbReference>
<name>DLTA_STAAE</name>
<reference key="1">
    <citation type="journal article" date="2008" name="J. Bacteriol.">
        <title>Genome sequence of Staphylococcus aureus strain Newman and comparative analysis of staphylococcal genomes: polymorphism and evolution of two major pathogenicity islands.</title>
        <authorList>
            <person name="Baba T."/>
            <person name="Bae T."/>
            <person name="Schneewind O."/>
            <person name="Takeuchi F."/>
            <person name="Hiramatsu K."/>
        </authorList>
    </citation>
    <scope>NUCLEOTIDE SEQUENCE [LARGE SCALE GENOMIC DNA]</scope>
    <source>
        <strain>Newman</strain>
    </source>
</reference>
<evidence type="ECO:0000255" key="1">
    <source>
        <dbReference type="HAMAP-Rule" id="MF_00593"/>
    </source>
</evidence>
<sequence>MTDIINKLQAFADANPQSIAVRHTTDELTYQQLMDESSKLAHRLQGSKKPMILFGHMSPYMIVGMIGAIKAGCGYVPVDTSIPEDRIKMIINKVQPEFVFNTTDESFESLEGEVFTIEDIKTSQDPVIFDSQIKDNDTVYTIFTSGSTGEPKGVQIEYASLVQFTEWMLELNKSGNEQQWLNQAPFSFDLSVMAIYPCLASGGTLNLVDKNMINKPKLLNEMLTATPINIWVSTPSFMEMCLLLPTLNEEQYGSLNEFFFCGEILPHRAAKALVNRFPSATIYNTYGPTEATVAVTSIQITQEILDQYPTLPVGVERPGARLSTTDEGELVIEGQSVSLGYLKNDQKTAEVFNFDDGIRTYHTGDKAKFENGQWFIQGRIDFQIKLNGYRMELEEIETQLRQSEFVKEAIVVPVYKNDKVIHLIGAIVPTTEVTDNAEMTKNIKNDLKSRLPEYMIPRKFEWMEQLPLTSNGKIDRKKIAEVING</sequence>